<proteinExistence type="evidence at protein level"/>
<sequence length="409" mass="46587">MASVGIEPSAAVRESTGNVTDADRLPEEMKDMKIQDDKEMEATIVNGNVTETGHIIVTTIGGRNGQPKQTISYMAERVVGHGSFGVVFQAKCLETGETVAIKKVLQDRRYKNRELQTMRLLDHPNVVSLKHCFFSTTEKDELYLNLVLEYVPETVHRVIKHYNKLNQRMPLVYVKLYTYQIFRSLSYIHRCIGVCHRDIKPQNLLVNPHTHQVKLCDFGSAKVLVKGEPNISYICSRYYRAPELIFGATEYTTAIDVWSAGCVLAELLLGQPLFPGESGVDQLVEIIKVLGTPTREEIKCMNPNYTEFKFPQIKAHPWHKIFHKRMPPEAVDLVSRLLQYSPNLRCAALDSLVHPFFDELRDPNARLPNGRFLPPLFNFKPHELKGVPVEMVAKLVPEHARKQCPWLSL</sequence>
<reference key="1">
    <citation type="journal article" date="1994" name="Mol. Gen. Genet.">
        <title>Arabidopsis homologs of the shaggy and GSK-3 protein kinases: molecular cloning and functional expression in Escherichia coli.</title>
        <authorList>
            <person name="Bianchi M.W."/>
            <person name="Guivarc'H D."/>
            <person name="Thomas M."/>
            <person name="Woodgett J.R."/>
            <person name="Kreis M."/>
        </authorList>
    </citation>
    <scope>NUCLEOTIDE SEQUENCE [MRNA]</scope>
    <source>
        <strain>cv. Columbia</strain>
        <tissue>Shoot</tissue>
    </source>
</reference>
<reference key="2">
    <citation type="journal article" date="1998" name="Gene">
        <title>The Arabidopsis SHAGGY-related protein kinase (ASK) gene family: structure, organization and evolution.</title>
        <authorList>
            <person name="Dornelas M.C."/>
            <person name="Lejeune B."/>
            <person name="Dron M."/>
            <person name="Kreis M."/>
        </authorList>
    </citation>
    <scope>NUCLEOTIDE SEQUENCE [GENOMIC DNA]</scope>
    <source>
        <strain>cv. Columbia</strain>
        <tissue>Leaf</tissue>
    </source>
</reference>
<reference key="3">
    <citation type="journal article" date="2000" name="Nature">
        <title>Sequence and analysis of chromosome 3 of the plant Arabidopsis thaliana.</title>
        <authorList>
            <person name="Salanoubat M."/>
            <person name="Lemcke K."/>
            <person name="Rieger M."/>
            <person name="Ansorge W."/>
            <person name="Unseld M."/>
            <person name="Fartmann B."/>
            <person name="Valle G."/>
            <person name="Bloecker H."/>
            <person name="Perez-Alonso M."/>
            <person name="Obermaier B."/>
            <person name="Delseny M."/>
            <person name="Boutry M."/>
            <person name="Grivell L.A."/>
            <person name="Mache R."/>
            <person name="Puigdomenech P."/>
            <person name="De Simone V."/>
            <person name="Choisne N."/>
            <person name="Artiguenave F."/>
            <person name="Robert C."/>
            <person name="Brottier P."/>
            <person name="Wincker P."/>
            <person name="Cattolico L."/>
            <person name="Weissenbach J."/>
            <person name="Saurin W."/>
            <person name="Quetier F."/>
            <person name="Schaefer M."/>
            <person name="Mueller-Auer S."/>
            <person name="Gabel C."/>
            <person name="Fuchs M."/>
            <person name="Benes V."/>
            <person name="Wurmbach E."/>
            <person name="Drzonek H."/>
            <person name="Erfle H."/>
            <person name="Jordan N."/>
            <person name="Bangert S."/>
            <person name="Wiedelmann R."/>
            <person name="Kranz H."/>
            <person name="Voss H."/>
            <person name="Holland R."/>
            <person name="Brandt P."/>
            <person name="Nyakatura G."/>
            <person name="Vezzi A."/>
            <person name="D'Angelo M."/>
            <person name="Pallavicini A."/>
            <person name="Toppo S."/>
            <person name="Simionati B."/>
            <person name="Conrad A."/>
            <person name="Hornischer K."/>
            <person name="Kauer G."/>
            <person name="Loehnert T.-H."/>
            <person name="Nordsiek G."/>
            <person name="Reichelt J."/>
            <person name="Scharfe M."/>
            <person name="Schoen O."/>
            <person name="Bargues M."/>
            <person name="Terol J."/>
            <person name="Climent J."/>
            <person name="Navarro P."/>
            <person name="Collado C."/>
            <person name="Perez-Perez A."/>
            <person name="Ottenwaelder B."/>
            <person name="Duchemin D."/>
            <person name="Cooke R."/>
            <person name="Laudie M."/>
            <person name="Berger-Llauro C."/>
            <person name="Purnelle B."/>
            <person name="Masuy D."/>
            <person name="de Haan M."/>
            <person name="Maarse A.C."/>
            <person name="Alcaraz J.-P."/>
            <person name="Cottet A."/>
            <person name="Casacuberta E."/>
            <person name="Monfort A."/>
            <person name="Argiriou A."/>
            <person name="Flores M."/>
            <person name="Liguori R."/>
            <person name="Vitale D."/>
            <person name="Mannhaupt G."/>
            <person name="Haase D."/>
            <person name="Schoof H."/>
            <person name="Rudd S."/>
            <person name="Zaccaria P."/>
            <person name="Mewes H.-W."/>
            <person name="Mayer K.F.X."/>
            <person name="Kaul S."/>
            <person name="Town C.D."/>
            <person name="Koo H.L."/>
            <person name="Tallon L.J."/>
            <person name="Jenkins J."/>
            <person name="Rooney T."/>
            <person name="Rizzo M."/>
            <person name="Walts A."/>
            <person name="Utterback T."/>
            <person name="Fujii C.Y."/>
            <person name="Shea T.P."/>
            <person name="Creasy T.H."/>
            <person name="Haas B."/>
            <person name="Maiti R."/>
            <person name="Wu D."/>
            <person name="Peterson J."/>
            <person name="Van Aken S."/>
            <person name="Pai G."/>
            <person name="Militscher J."/>
            <person name="Sellers P."/>
            <person name="Gill J.E."/>
            <person name="Feldblyum T.V."/>
            <person name="Preuss D."/>
            <person name="Lin X."/>
            <person name="Nierman W.C."/>
            <person name="Salzberg S.L."/>
            <person name="White O."/>
            <person name="Venter J.C."/>
            <person name="Fraser C.M."/>
            <person name="Kaneko T."/>
            <person name="Nakamura Y."/>
            <person name="Sato S."/>
            <person name="Kato T."/>
            <person name="Asamizu E."/>
            <person name="Sasamoto S."/>
            <person name="Kimura T."/>
            <person name="Idesawa K."/>
            <person name="Kawashima K."/>
            <person name="Kishida Y."/>
            <person name="Kiyokawa C."/>
            <person name="Kohara M."/>
            <person name="Matsumoto M."/>
            <person name="Matsuno A."/>
            <person name="Muraki A."/>
            <person name="Nakayama S."/>
            <person name="Nakazaki N."/>
            <person name="Shinpo S."/>
            <person name="Takeuchi C."/>
            <person name="Wada T."/>
            <person name="Watanabe A."/>
            <person name="Yamada M."/>
            <person name="Yasuda M."/>
            <person name="Tabata S."/>
        </authorList>
    </citation>
    <scope>NUCLEOTIDE SEQUENCE [LARGE SCALE GENOMIC DNA]</scope>
    <source>
        <strain>cv. Columbia</strain>
    </source>
</reference>
<reference key="4">
    <citation type="journal article" date="2017" name="Plant J.">
        <title>Araport11: a complete reannotation of the Arabidopsis thaliana reference genome.</title>
        <authorList>
            <person name="Cheng C.Y."/>
            <person name="Krishnakumar V."/>
            <person name="Chan A.P."/>
            <person name="Thibaud-Nissen F."/>
            <person name="Schobel S."/>
            <person name="Town C.D."/>
        </authorList>
    </citation>
    <scope>GENOME REANNOTATION</scope>
    <source>
        <strain>cv. Columbia</strain>
    </source>
</reference>
<reference key="5">
    <citation type="journal article" date="2003" name="Science">
        <title>Empirical analysis of transcriptional activity in the Arabidopsis genome.</title>
        <authorList>
            <person name="Yamada K."/>
            <person name="Lim J."/>
            <person name="Dale J.M."/>
            <person name="Chen H."/>
            <person name="Shinn P."/>
            <person name="Palm C.J."/>
            <person name="Southwick A.M."/>
            <person name="Wu H.C."/>
            <person name="Kim C.J."/>
            <person name="Nguyen M."/>
            <person name="Pham P.K."/>
            <person name="Cheuk R.F."/>
            <person name="Karlin-Newmann G."/>
            <person name="Liu S.X."/>
            <person name="Lam B."/>
            <person name="Sakano H."/>
            <person name="Wu T."/>
            <person name="Yu G."/>
            <person name="Miranda M."/>
            <person name="Quach H.L."/>
            <person name="Tripp M."/>
            <person name="Chang C.H."/>
            <person name="Lee J.M."/>
            <person name="Toriumi M.J."/>
            <person name="Chan M.M."/>
            <person name="Tang C.C."/>
            <person name="Onodera C.S."/>
            <person name="Deng J.M."/>
            <person name="Akiyama K."/>
            <person name="Ansari Y."/>
            <person name="Arakawa T."/>
            <person name="Banh J."/>
            <person name="Banno F."/>
            <person name="Bowser L."/>
            <person name="Brooks S.Y."/>
            <person name="Carninci P."/>
            <person name="Chao Q."/>
            <person name="Choy N."/>
            <person name="Enju A."/>
            <person name="Goldsmith A.D."/>
            <person name="Gurjal M."/>
            <person name="Hansen N.F."/>
            <person name="Hayashizaki Y."/>
            <person name="Johnson-Hopson C."/>
            <person name="Hsuan V.W."/>
            <person name="Iida K."/>
            <person name="Karnes M."/>
            <person name="Khan S."/>
            <person name="Koesema E."/>
            <person name="Ishida J."/>
            <person name="Jiang P.X."/>
            <person name="Jones T."/>
            <person name="Kawai J."/>
            <person name="Kamiya A."/>
            <person name="Meyers C."/>
            <person name="Nakajima M."/>
            <person name="Narusaka M."/>
            <person name="Seki M."/>
            <person name="Sakurai T."/>
            <person name="Satou M."/>
            <person name="Tamse R."/>
            <person name="Vaysberg M."/>
            <person name="Wallender E.K."/>
            <person name="Wong C."/>
            <person name="Yamamura Y."/>
            <person name="Yuan S."/>
            <person name="Shinozaki K."/>
            <person name="Davis R.W."/>
            <person name="Theologis A."/>
            <person name="Ecker J.R."/>
        </authorList>
    </citation>
    <scope>NUCLEOTIDE SEQUENCE [LARGE SCALE MRNA]</scope>
    <source>
        <strain>cv. Columbia</strain>
    </source>
</reference>
<reference key="6">
    <citation type="submission" date="2002-03" db="EMBL/GenBank/DDBJ databases">
        <title>Full-length cDNA from Arabidopsis thaliana.</title>
        <authorList>
            <person name="Brover V.V."/>
            <person name="Troukhan M.E."/>
            <person name="Alexandrov N.A."/>
            <person name="Lu Y.-P."/>
            <person name="Flavell R.B."/>
            <person name="Feldmann K.A."/>
        </authorList>
    </citation>
    <scope>NUCLEOTIDE SEQUENCE [LARGE SCALE MRNA]</scope>
</reference>
<reference key="7">
    <citation type="journal article" date="2017" name="Mol. Cell">
        <title>The F-box protein KIB1 mediates brassinosteroid-induced inactivation and degradation of GSK3-like kinases in Arabidopsis.</title>
        <authorList>
            <person name="Zhu J.-Y."/>
            <person name="Li Y."/>
            <person name="Cao D.-M."/>
            <person name="Yang H."/>
            <person name="Oh E."/>
            <person name="Bi Y."/>
            <person name="Zhu S."/>
            <person name="Wang Z.-Y."/>
        </authorList>
    </citation>
    <scope>INTERACTION WITH KIB1</scope>
    <source>
        <strain>cv. Columbia</strain>
        <strain>cv. Wassilewskija</strain>
    </source>
</reference>
<reference key="8">
    <citation type="journal article" date="2018" name="Nature">
        <title>POLAR-guided signalling complex assembly and localization drive asymmetric cell division.</title>
        <authorList>
            <person name="Houbaert A."/>
            <person name="Zhang C."/>
            <person name="Tiwari M."/>
            <person name="Wang K."/>
            <person name="de Marcos Serrano A."/>
            <person name="Savatin D.V."/>
            <person name="Urs M.J."/>
            <person name="Zhiponova M.K."/>
            <person name="Gudesblat G.E."/>
            <person name="Vanhoutte I."/>
            <person name="Eeckhout D."/>
            <person name="Boeren S."/>
            <person name="Karimi M."/>
            <person name="Betti C."/>
            <person name="Jacobs T."/>
            <person name="Fenoll C."/>
            <person name="Mena M."/>
            <person name="de Vries S."/>
            <person name="De Jaeger G."/>
            <person name="Russinova E."/>
        </authorList>
    </citation>
    <scope>FUNCTION</scope>
    <scope>INTERACTION WITH POLAR AND BASL</scope>
    <scope>SUBCELLULAR LOCATION</scope>
    <scope>DEVELOPMENTAL STAGE</scope>
    <source>
        <strain>cv. Columbia</strain>
    </source>
</reference>
<accession>P43289</accession>
<accession>Q8L5U7</accession>
<dbReference type="EC" id="2.7.11.1"/>
<dbReference type="EMBL" id="X75431">
    <property type="protein sequence ID" value="CAA53180.1"/>
    <property type="molecule type" value="mRNA"/>
</dbReference>
<dbReference type="EMBL" id="Y12710">
    <property type="protein sequence ID" value="CAA73247.1"/>
    <property type="molecule type" value="Genomic_DNA"/>
</dbReference>
<dbReference type="EMBL" id="AC012393">
    <property type="protein sequence ID" value="AAF26086.1"/>
    <property type="molecule type" value="Genomic_DNA"/>
</dbReference>
<dbReference type="EMBL" id="CP002686">
    <property type="protein sequence ID" value="AEE74303.1"/>
    <property type="molecule type" value="Genomic_DNA"/>
</dbReference>
<dbReference type="EMBL" id="CP002686">
    <property type="protein sequence ID" value="AEE74304.1"/>
    <property type="molecule type" value="Genomic_DNA"/>
</dbReference>
<dbReference type="EMBL" id="AY093347">
    <property type="protein sequence ID" value="AAM13346.1"/>
    <property type="molecule type" value="mRNA"/>
</dbReference>
<dbReference type="EMBL" id="AY062713">
    <property type="protein sequence ID" value="AAL32791.1"/>
    <property type="molecule type" value="mRNA"/>
</dbReference>
<dbReference type="EMBL" id="AY085752">
    <property type="protein sequence ID" value="AAM62970.1"/>
    <property type="molecule type" value="mRNA"/>
</dbReference>
<dbReference type="PIR" id="S41597">
    <property type="entry name" value="S41597"/>
</dbReference>
<dbReference type="RefSeq" id="NP_187235.1">
    <property type="nucleotide sequence ID" value="NM_111458.5"/>
</dbReference>
<dbReference type="RefSeq" id="NP_850520.1">
    <property type="nucleotide sequence ID" value="NM_180189.4"/>
</dbReference>
<dbReference type="SMR" id="P43289"/>
<dbReference type="BioGRID" id="5088">
    <property type="interactions" value="5"/>
</dbReference>
<dbReference type="FunCoup" id="P43289">
    <property type="interactions" value="3246"/>
</dbReference>
<dbReference type="IntAct" id="P43289">
    <property type="interactions" value="2"/>
</dbReference>
<dbReference type="STRING" id="3702.P43289"/>
<dbReference type="iPTMnet" id="P43289"/>
<dbReference type="PaxDb" id="3702-AT3G05840.1"/>
<dbReference type="ProteomicsDB" id="237103"/>
<dbReference type="EnsemblPlants" id="AT3G05840.1">
    <property type="protein sequence ID" value="AT3G05840.1"/>
    <property type="gene ID" value="AT3G05840"/>
</dbReference>
<dbReference type="EnsemblPlants" id="AT3G05840.2">
    <property type="protein sequence ID" value="AT3G05840.2"/>
    <property type="gene ID" value="AT3G05840"/>
</dbReference>
<dbReference type="GeneID" id="819753"/>
<dbReference type="Gramene" id="AT3G05840.1">
    <property type="protein sequence ID" value="AT3G05840.1"/>
    <property type="gene ID" value="AT3G05840"/>
</dbReference>
<dbReference type="Gramene" id="AT3G05840.2">
    <property type="protein sequence ID" value="AT3G05840.2"/>
    <property type="gene ID" value="AT3G05840"/>
</dbReference>
<dbReference type="KEGG" id="ath:AT3G05840"/>
<dbReference type="Araport" id="AT3G05840"/>
<dbReference type="TAIR" id="AT3G05840">
    <property type="gene designation" value="ATSK12"/>
</dbReference>
<dbReference type="eggNOG" id="KOG0658">
    <property type="taxonomic scope" value="Eukaryota"/>
</dbReference>
<dbReference type="HOGENOM" id="CLU_000288_181_20_1"/>
<dbReference type="InParanoid" id="P43289"/>
<dbReference type="OMA" id="HASTSIM"/>
<dbReference type="PhylomeDB" id="P43289"/>
<dbReference type="BRENDA" id="2.7.11.26">
    <property type="organism ID" value="399"/>
</dbReference>
<dbReference type="PRO" id="PR:P43289"/>
<dbReference type="Proteomes" id="UP000006548">
    <property type="component" value="Chromosome 3"/>
</dbReference>
<dbReference type="ExpressionAtlas" id="P43289">
    <property type="expression patterns" value="baseline and differential"/>
</dbReference>
<dbReference type="GO" id="GO:0005938">
    <property type="term" value="C:cell cortex"/>
    <property type="evidence" value="ECO:0000314"/>
    <property type="project" value="UniProtKB"/>
</dbReference>
<dbReference type="GO" id="GO:0005737">
    <property type="term" value="C:cytoplasm"/>
    <property type="evidence" value="ECO:0000314"/>
    <property type="project" value="TAIR"/>
</dbReference>
<dbReference type="GO" id="GO:0005634">
    <property type="term" value="C:nucleus"/>
    <property type="evidence" value="ECO:0000314"/>
    <property type="project" value="TAIR"/>
</dbReference>
<dbReference type="GO" id="GO:0005524">
    <property type="term" value="F:ATP binding"/>
    <property type="evidence" value="ECO:0007669"/>
    <property type="project" value="UniProtKB-KW"/>
</dbReference>
<dbReference type="GO" id="GO:0106310">
    <property type="term" value="F:protein serine kinase activity"/>
    <property type="evidence" value="ECO:0007669"/>
    <property type="project" value="RHEA"/>
</dbReference>
<dbReference type="GO" id="GO:0004674">
    <property type="term" value="F:protein serine/threonine kinase activity"/>
    <property type="evidence" value="ECO:0007005"/>
    <property type="project" value="TAIR"/>
</dbReference>
<dbReference type="GO" id="GO:0009933">
    <property type="term" value="P:meristem structural organization"/>
    <property type="evidence" value="ECO:0000315"/>
    <property type="project" value="TAIR"/>
</dbReference>
<dbReference type="GO" id="GO:0046777">
    <property type="term" value="P:protein autophosphorylation"/>
    <property type="evidence" value="ECO:0007005"/>
    <property type="project" value="TAIR"/>
</dbReference>
<dbReference type="CDD" id="cd14137">
    <property type="entry name" value="STKc_GSK3"/>
    <property type="match status" value="1"/>
</dbReference>
<dbReference type="FunFam" id="3.30.200.20:FF:000009">
    <property type="entry name" value="Glycogen synthase kinase-3 beta"/>
    <property type="match status" value="1"/>
</dbReference>
<dbReference type="FunFam" id="1.10.510.10:FF:000082">
    <property type="entry name" value="Shaggy-related protein kinase kappa"/>
    <property type="match status" value="1"/>
</dbReference>
<dbReference type="Gene3D" id="3.30.200.20">
    <property type="entry name" value="Phosphorylase Kinase, domain 1"/>
    <property type="match status" value="1"/>
</dbReference>
<dbReference type="Gene3D" id="1.10.510.10">
    <property type="entry name" value="Transferase(Phosphotransferase) domain 1"/>
    <property type="match status" value="1"/>
</dbReference>
<dbReference type="InterPro" id="IPR050591">
    <property type="entry name" value="GSK-3"/>
</dbReference>
<dbReference type="InterPro" id="IPR011009">
    <property type="entry name" value="Kinase-like_dom_sf"/>
</dbReference>
<dbReference type="InterPro" id="IPR000719">
    <property type="entry name" value="Prot_kinase_dom"/>
</dbReference>
<dbReference type="InterPro" id="IPR017441">
    <property type="entry name" value="Protein_kinase_ATP_BS"/>
</dbReference>
<dbReference type="InterPro" id="IPR008271">
    <property type="entry name" value="Ser/Thr_kinase_AS"/>
</dbReference>
<dbReference type="InterPro" id="IPR039192">
    <property type="entry name" value="STKc_GSK3"/>
</dbReference>
<dbReference type="PANTHER" id="PTHR24057">
    <property type="entry name" value="GLYCOGEN SYNTHASE KINASE-3 ALPHA"/>
    <property type="match status" value="1"/>
</dbReference>
<dbReference type="PANTHER" id="PTHR24057:SF0">
    <property type="entry name" value="PROTEIN KINASE SHAGGY-RELATED"/>
    <property type="match status" value="1"/>
</dbReference>
<dbReference type="Pfam" id="PF00069">
    <property type="entry name" value="Pkinase"/>
    <property type="match status" value="1"/>
</dbReference>
<dbReference type="SMART" id="SM00220">
    <property type="entry name" value="S_TKc"/>
    <property type="match status" value="1"/>
</dbReference>
<dbReference type="SUPFAM" id="SSF56112">
    <property type="entry name" value="Protein kinase-like (PK-like)"/>
    <property type="match status" value="1"/>
</dbReference>
<dbReference type="PROSITE" id="PS00107">
    <property type="entry name" value="PROTEIN_KINASE_ATP"/>
    <property type="match status" value="1"/>
</dbReference>
<dbReference type="PROSITE" id="PS50011">
    <property type="entry name" value="PROTEIN_KINASE_DOM"/>
    <property type="match status" value="1"/>
</dbReference>
<dbReference type="PROSITE" id="PS00108">
    <property type="entry name" value="PROTEIN_KINASE_ST"/>
    <property type="match status" value="1"/>
</dbReference>
<protein>
    <recommendedName>
        <fullName evidence="8">Shaggy-related protein kinase gamma</fullName>
        <ecNumber>2.7.11.1</ecNumber>
    </recommendedName>
    <alternativeName>
        <fullName evidence="8">ASK-gamma</fullName>
    </alternativeName>
    <alternativeName>
        <fullName evidence="7">Shaggy-related protein kinase 12</fullName>
        <shortName evidence="7">AtSK12</shortName>
    </alternativeName>
</protein>
<feature type="initiator methionine" description="Removed" evidence="1">
    <location>
        <position position="1"/>
    </location>
</feature>
<feature type="chain" id="PRO_0000086218" description="Shaggy-related protein kinase gamma">
    <location>
        <begin position="2"/>
        <end position="409"/>
    </location>
</feature>
<feature type="domain" description="Protein kinase" evidence="3">
    <location>
        <begin position="73"/>
        <end position="357"/>
    </location>
</feature>
<feature type="active site" description="Proton acceptor" evidence="3 4">
    <location>
        <position position="198"/>
    </location>
</feature>
<feature type="binding site" evidence="3">
    <location>
        <begin position="79"/>
        <end position="87"/>
    </location>
    <ligand>
        <name>ATP</name>
        <dbReference type="ChEBI" id="CHEBI:30616"/>
    </ligand>
</feature>
<feature type="binding site" evidence="3">
    <location>
        <position position="102"/>
    </location>
    <ligand>
        <name>ATP</name>
        <dbReference type="ChEBI" id="CHEBI:30616"/>
    </ligand>
</feature>
<feature type="modified residue" description="N-acetylalanine" evidence="1">
    <location>
        <position position="2"/>
    </location>
</feature>
<feature type="modified residue" description="Phosphotyrosine" evidence="2">
    <location>
        <position position="233"/>
    </location>
</feature>
<feature type="sequence conflict" description="In Ref. 5; AAM62970." evidence="9" ref="5">
    <original>A</original>
    <variation>V</variation>
    <location>
        <position position="22"/>
    </location>
</feature>
<feature type="sequence conflict" description="In Ref. 5; AAM62970." evidence="9" ref="5">
    <original>I</original>
    <variation>V</variation>
    <location>
        <position position="44"/>
    </location>
</feature>
<gene>
    <name evidence="8" type="primary">ASK3</name>
    <name evidence="7" type="synonym">SK12</name>
    <name evidence="10" type="ordered locus">At3g05840</name>
    <name evidence="11" type="ORF">F10A16.14</name>
</gene>
<evidence type="ECO:0000250" key="1">
    <source>
        <dbReference type="UniProtKB" id="P43288"/>
    </source>
</evidence>
<evidence type="ECO:0000250" key="2">
    <source>
        <dbReference type="UniProtKB" id="Q39011"/>
    </source>
</evidence>
<evidence type="ECO:0000255" key="3">
    <source>
        <dbReference type="PROSITE-ProRule" id="PRU00159"/>
    </source>
</evidence>
<evidence type="ECO:0000255" key="4">
    <source>
        <dbReference type="PROSITE-ProRule" id="PRU10027"/>
    </source>
</evidence>
<evidence type="ECO:0000269" key="5">
    <source>
    </source>
</evidence>
<evidence type="ECO:0000269" key="6">
    <source>
    </source>
</evidence>
<evidence type="ECO:0000303" key="7">
    <source>
    </source>
</evidence>
<evidence type="ECO:0000303" key="8">
    <source>
    </source>
</evidence>
<evidence type="ECO:0000305" key="9"/>
<evidence type="ECO:0000312" key="10">
    <source>
        <dbReference type="Araport" id="AT3G05840"/>
    </source>
</evidence>
<evidence type="ECO:0000312" key="11">
    <source>
        <dbReference type="EMBL" id="AAF26086.1"/>
    </source>
</evidence>
<comment type="function">
    <text evidence="6">May mediate extracellular signals to regulate transcription in differentiating cells. Probably involved first at the cortical polarity site, to restrict MAPK signaling and promote asymmetric cell division (ACD), and second in the nucleus of stomatal lineage ground cells (SLGCs) or meristemoids, to limit cell division and to promote differentiation into pavement or stomatal guard cells, respectively (PubMed:30429609). Phosphorylate YDA and SPCH in vitro (PubMed:30429609).</text>
</comment>
<comment type="catalytic activity">
    <reaction>
        <text>L-seryl-[protein] + ATP = O-phospho-L-seryl-[protein] + ADP + H(+)</text>
        <dbReference type="Rhea" id="RHEA:17989"/>
        <dbReference type="Rhea" id="RHEA-COMP:9863"/>
        <dbReference type="Rhea" id="RHEA-COMP:11604"/>
        <dbReference type="ChEBI" id="CHEBI:15378"/>
        <dbReference type="ChEBI" id="CHEBI:29999"/>
        <dbReference type="ChEBI" id="CHEBI:30616"/>
        <dbReference type="ChEBI" id="CHEBI:83421"/>
        <dbReference type="ChEBI" id="CHEBI:456216"/>
        <dbReference type="EC" id="2.7.11.1"/>
    </reaction>
</comment>
<comment type="catalytic activity">
    <reaction>
        <text>L-threonyl-[protein] + ATP = O-phospho-L-threonyl-[protein] + ADP + H(+)</text>
        <dbReference type="Rhea" id="RHEA:46608"/>
        <dbReference type="Rhea" id="RHEA-COMP:11060"/>
        <dbReference type="Rhea" id="RHEA-COMP:11605"/>
        <dbReference type="ChEBI" id="CHEBI:15378"/>
        <dbReference type="ChEBI" id="CHEBI:30013"/>
        <dbReference type="ChEBI" id="CHEBI:30616"/>
        <dbReference type="ChEBI" id="CHEBI:61977"/>
        <dbReference type="ChEBI" id="CHEBI:456216"/>
        <dbReference type="EC" id="2.7.11.1"/>
    </reaction>
</comment>
<comment type="subunit">
    <text evidence="5 6">Binds to KIB1 (PubMed:28575660). Component of a complex made of POLAR, BASL, ASK7/BIN2 and ASK3/SK12 (PubMed:30429609). Binds to POLAR and BASL (PubMed:30429609).</text>
</comment>
<comment type="subcellular location">
    <subcellularLocation>
        <location evidence="6">Cytoplasm</location>
    </subcellularLocation>
    <subcellularLocation>
        <location evidence="6">Cytoplasm</location>
        <location evidence="6">Cell cortex</location>
    </subcellularLocation>
    <text evidence="6">Localized throughout the plasma membrane in asymmetric cell division (ACD) precursors (PubMed:30429609). Accumulates transiently in a polarized pattern at the plasma membrane immediately before ACD, relocalizing to well-defined foci, in a POLAR-dependent and in the presence of BASL (PubMed:30429609).</text>
</comment>
<comment type="tissue specificity">
    <text>Roots, shoots and leaves.</text>
</comment>
<comment type="developmental stage">
    <text evidence="6">Expressed in protodermal cells in young seedlings.</text>
</comment>
<comment type="PTM">
    <text>Autophosphorylated mainly on threonine and serine residues.</text>
</comment>
<comment type="similarity">
    <text evidence="9">Belongs to the protein kinase superfamily. CMGC Ser/Thr protein kinase family. GSK-3 subfamily.</text>
</comment>
<keyword id="KW-0007">Acetylation</keyword>
<keyword id="KW-0067">ATP-binding</keyword>
<keyword id="KW-0963">Cytoplasm</keyword>
<keyword id="KW-0418">Kinase</keyword>
<keyword id="KW-0547">Nucleotide-binding</keyword>
<keyword id="KW-0597">Phosphoprotein</keyword>
<keyword id="KW-1185">Reference proteome</keyword>
<keyword id="KW-0723">Serine/threonine-protein kinase</keyword>
<keyword id="KW-0808">Transferase</keyword>
<name>KSG3_ARATH</name>
<organism>
    <name type="scientific">Arabidopsis thaliana</name>
    <name type="common">Mouse-ear cress</name>
    <dbReference type="NCBI Taxonomy" id="3702"/>
    <lineage>
        <taxon>Eukaryota</taxon>
        <taxon>Viridiplantae</taxon>
        <taxon>Streptophyta</taxon>
        <taxon>Embryophyta</taxon>
        <taxon>Tracheophyta</taxon>
        <taxon>Spermatophyta</taxon>
        <taxon>Magnoliopsida</taxon>
        <taxon>eudicotyledons</taxon>
        <taxon>Gunneridae</taxon>
        <taxon>Pentapetalae</taxon>
        <taxon>rosids</taxon>
        <taxon>malvids</taxon>
        <taxon>Brassicales</taxon>
        <taxon>Brassicaceae</taxon>
        <taxon>Camelineae</taxon>
        <taxon>Arabidopsis</taxon>
    </lineage>
</organism>